<protein>
    <recommendedName>
        <fullName>Adenylate kinase 7</fullName>
        <shortName>AK 7</shortName>
        <ecNumber evidence="2">2.7.4.3</ecNumber>
        <ecNumber evidence="2">2.7.4.6</ecNumber>
    </recommendedName>
    <alternativeName>
        <fullName>ATP-AMP transphosphorylase 7</fullName>
    </alternativeName>
</protein>
<gene>
    <name type="primary">AK7</name>
    <name type="ORF">QtsA-14746</name>
</gene>
<proteinExistence type="evidence at transcript level"/>
<dbReference type="EC" id="2.7.4.3" evidence="2"/>
<dbReference type="EC" id="2.7.4.6" evidence="2"/>
<dbReference type="EMBL" id="AB070135">
    <property type="protein sequence ID" value="BAB63080.1"/>
    <property type="status" value="ALT_INIT"/>
    <property type="molecule type" value="mRNA"/>
</dbReference>
<dbReference type="SMR" id="Q95JP6"/>
<dbReference type="STRING" id="9541.ENSMFAP00000044640"/>
<dbReference type="eggNOG" id="KOG3078">
    <property type="taxonomic scope" value="Eukaryota"/>
</dbReference>
<dbReference type="Proteomes" id="UP000233100">
    <property type="component" value="Unplaced"/>
</dbReference>
<dbReference type="GO" id="GO:0005829">
    <property type="term" value="C:cytosol"/>
    <property type="evidence" value="ECO:0007669"/>
    <property type="project" value="UniProtKB-SubCell"/>
</dbReference>
<dbReference type="GO" id="GO:0031514">
    <property type="term" value="C:motile cilium"/>
    <property type="evidence" value="ECO:0007669"/>
    <property type="project" value="UniProtKB-SubCell"/>
</dbReference>
<dbReference type="GO" id="GO:0004127">
    <property type="term" value="F:(d)CMP kinase activity"/>
    <property type="evidence" value="ECO:0000250"/>
    <property type="project" value="UniProtKB"/>
</dbReference>
<dbReference type="GO" id="GO:0004017">
    <property type="term" value="F:adenylate kinase activity"/>
    <property type="evidence" value="ECO:0000250"/>
    <property type="project" value="UniProtKB"/>
</dbReference>
<dbReference type="GO" id="GO:0005524">
    <property type="term" value="F:ATP binding"/>
    <property type="evidence" value="ECO:0007669"/>
    <property type="project" value="UniProtKB-KW"/>
</dbReference>
<dbReference type="GO" id="GO:0004550">
    <property type="term" value="F:nucleoside diphosphate kinase activity"/>
    <property type="evidence" value="ECO:0000250"/>
    <property type="project" value="UniProtKB"/>
</dbReference>
<dbReference type="GO" id="GO:0030030">
    <property type="term" value="P:cell projection organization"/>
    <property type="evidence" value="ECO:0007669"/>
    <property type="project" value="UniProtKB-KW"/>
</dbReference>
<dbReference type="CDD" id="cd01428">
    <property type="entry name" value="ADK"/>
    <property type="match status" value="1"/>
</dbReference>
<dbReference type="CDD" id="cd22967">
    <property type="entry name" value="DD_AK7"/>
    <property type="match status" value="1"/>
</dbReference>
<dbReference type="FunFam" id="3.40.50.300:FF:001489">
    <property type="entry name" value="Adenylate kinase 7"/>
    <property type="match status" value="1"/>
</dbReference>
<dbReference type="Gene3D" id="1.20.890.10">
    <property type="entry name" value="cAMP-dependent protein kinase regulatory subunit, dimerization-anchoring domain"/>
    <property type="match status" value="1"/>
</dbReference>
<dbReference type="Gene3D" id="3.40.50.720">
    <property type="entry name" value="NAD(P)-binding Rossmann-like Domain"/>
    <property type="match status" value="1"/>
</dbReference>
<dbReference type="Gene3D" id="3.40.50.300">
    <property type="entry name" value="P-loop containing nucleotide triphosphate hydrolases"/>
    <property type="match status" value="1"/>
</dbReference>
<dbReference type="InterPro" id="IPR000850">
    <property type="entry name" value="Adenylat/UMP-CMP_kin"/>
</dbReference>
<dbReference type="InterPro" id="IPR047499">
    <property type="entry name" value="DD_AK7"/>
</dbReference>
<dbReference type="InterPro" id="IPR007858">
    <property type="entry name" value="Dpy-30_motif"/>
</dbReference>
<dbReference type="InterPro" id="IPR036291">
    <property type="entry name" value="NAD(P)-bd_dom_sf"/>
</dbReference>
<dbReference type="InterPro" id="IPR027417">
    <property type="entry name" value="P-loop_NTPase"/>
</dbReference>
<dbReference type="PANTHER" id="PTHR23359">
    <property type="entry name" value="NUCLEOTIDE KINASE"/>
    <property type="match status" value="1"/>
</dbReference>
<dbReference type="Pfam" id="PF00406">
    <property type="entry name" value="ADK"/>
    <property type="match status" value="1"/>
</dbReference>
<dbReference type="Pfam" id="PF05186">
    <property type="entry name" value="Dpy-30"/>
    <property type="match status" value="1"/>
</dbReference>
<dbReference type="SUPFAM" id="SSF51735">
    <property type="entry name" value="NAD(P)-binding Rossmann-fold domains"/>
    <property type="match status" value="1"/>
</dbReference>
<dbReference type="SUPFAM" id="SSF52540">
    <property type="entry name" value="P-loop containing nucleoside triphosphate hydrolases"/>
    <property type="match status" value="1"/>
</dbReference>
<feature type="chain" id="PRO_0000158953" description="Adenylate kinase 7">
    <location>
        <begin position="1" status="less than"/>
        <end position="533"/>
    </location>
</feature>
<feature type="region of interest" description="Adenylate kinase" evidence="2">
    <location>
        <begin position="177"/>
        <end position="426"/>
    </location>
</feature>
<feature type="region of interest" description="NMP" evidence="1">
    <location>
        <begin position="207"/>
        <end position="265"/>
    </location>
</feature>
<feature type="region of interest" description="LID" evidence="1">
    <location>
        <begin position="347"/>
        <end position="357"/>
    </location>
</feature>
<feature type="region of interest" description="DPY-30" evidence="2">
    <location>
        <begin position="489"/>
        <end position="533"/>
    </location>
</feature>
<feature type="coiled-coil region" evidence="3">
    <location>
        <begin position="419"/>
        <end position="487"/>
    </location>
</feature>
<feature type="binding site" evidence="1">
    <location>
        <begin position="187"/>
        <end position="192"/>
    </location>
    <ligand>
        <name>ATP</name>
        <dbReference type="ChEBI" id="CHEBI:30616"/>
    </ligand>
</feature>
<feature type="binding site" evidence="1">
    <location>
        <begin position="242"/>
        <end position="265"/>
    </location>
    <ligand>
        <name>AMP</name>
        <dbReference type="ChEBI" id="CHEBI:456215"/>
    </ligand>
</feature>
<feature type="binding site" evidence="1">
    <location>
        <begin position="292"/>
        <end position="295"/>
    </location>
    <ligand>
        <name>AMP</name>
        <dbReference type="ChEBI" id="CHEBI:456215"/>
    </ligand>
</feature>
<feature type="binding site" evidence="1">
    <location>
        <position position="299"/>
    </location>
    <ligand>
        <name>AMP</name>
        <dbReference type="ChEBI" id="CHEBI:456215"/>
    </ligand>
</feature>
<feature type="binding site" evidence="1">
    <location>
        <position position="365"/>
    </location>
    <ligand>
        <name>AMP</name>
        <dbReference type="ChEBI" id="CHEBI:456215"/>
    </ligand>
</feature>
<feature type="binding site" evidence="1">
    <location>
        <position position="397"/>
    </location>
    <ligand>
        <name>ATP</name>
        <dbReference type="ChEBI" id="CHEBI:30616"/>
    </ligand>
</feature>
<feature type="non-terminal residue">
    <location>
        <position position="1"/>
    </location>
</feature>
<evidence type="ECO:0000250" key="1">
    <source>
        <dbReference type="UniProtKB" id="P69441"/>
    </source>
</evidence>
<evidence type="ECO:0000250" key="2">
    <source>
        <dbReference type="UniProtKB" id="Q96M32"/>
    </source>
</evidence>
<evidence type="ECO:0000255" key="3"/>
<evidence type="ECO:0000305" key="4"/>
<name>KAD7_MACFA</name>
<keyword id="KW-0067">ATP-binding</keyword>
<keyword id="KW-0966">Cell projection</keyword>
<keyword id="KW-0969">Cilium</keyword>
<keyword id="KW-0970">Cilium biogenesis/degradation</keyword>
<keyword id="KW-0175">Coiled coil</keyword>
<keyword id="KW-0963">Cytoplasm</keyword>
<keyword id="KW-0282">Flagellum</keyword>
<keyword id="KW-0418">Kinase</keyword>
<keyword id="KW-0547">Nucleotide-binding</keyword>
<keyword id="KW-1185">Reference proteome</keyword>
<keyword id="KW-0808">Transferase</keyword>
<sequence>INAEKMVLKFGRKTRKFATYVVAAGLQYGAEGGMLHTFFKMAWLGEIPALPVFGDGTNVIPTIHVLDLAGVIQNVIDHTPKPHYLVAVDESVHTLEDIVKCISKNTGPGKIQKIPRENAYLTKDLTQDCLDHLLVNLRMEALFVKENFNIRWVAQTGFVENINSILKEYKQSRGLMPVKICILGPPAVGKSSIAEELAKYYKLHHIQLKDVISEAIAKLETIVAPKDIGEGKEEVEEEEEEENVEDAQELLDGIKESMEQNAGQLDDQYIIRFMKEKLKSMPCRNQGYILDGFPKTYDQAKDLFNQEDEEEEDEVRGRMFPFDKLIIPEFVCALDASDEFLKERVINLPERIVAGTHYSQDRFLRALSNYRDINIEDETVFNYFDEIEIHPIHIDVGKLEDAQNRLAIKQLIKEIGEPRNYGLTDEEKAEEERKAAEERLAREAAEEAEREHQEAVEMAEKIARWEEWNKRLEEVKREERELLEAQSIPLRNYLMTYVMPTLIQGLNECCNVRPEDPVDFLAEYLFKNNPEAQ</sequence>
<comment type="function">
    <text evidence="2">Nucleoside monophosphate (NMP) kinase that catalyzes the reversible transfer of the terminal phosphate group between nucleoside triphosphates and monophosphates. Has highest activity toward AMP, and weaker activity toward dAMP, CMP and dCMP. Also displays broad nucleoside diphosphate kinase activity. Involved in maintaining ciliary structure and function.</text>
</comment>
<comment type="catalytic activity">
    <reaction evidence="2">
        <text>AMP + ATP = 2 ADP</text>
        <dbReference type="Rhea" id="RHEA:12973"/>
        <dbReference type="ChEBI" id="CHEBI:30616"/>
        <dbReference type="ChEBI" id="CHEBI:456215"/>
        <dbReference type="ChEBI" id="CHEBI:456216"/>
        <dbReference type="EC" id="2.7.4.3"/>
    </reaction>
</comment>
<comment type="catalytic activity">
    <reaction evidence="2">
        <text>a 2'-deoxyribonucleoside 5'-diphosphate + ATP = a 2'-deoxyribonucleoside 5'-triphosphate + ADP</text>
        <dbReference type="Rhea" id="RHEA:44640"/>
        <dbReference type="ChEBI" id="CHEBI:30616"/>
        <dbReference type="ChEBI" id="CHEBI:61560"/>
        <dbReference type="ChEBI" id="CHEBI:73316"/>
        <dbReference type="ChEBI" id="CHEBI:456216"/>
        <dbReference type="EC" id="2.7.4.6"/>
    </reaction>
</comment>
<comment type="catalytic activity">
    <reaction evidence="2">
        <text>a ribonucleoside 5'-diphosphate + ATP = a ribonucleoside 5'-triphosphate + ADP</text>
        <dbReference type="Rhea" id="RHEA:18113"/>
        <dbReference type="ChEBI" id="CHEBI:30616"/>
        <dbReference type="ChEBI" id="CHEBI:57930"/>
        <dbReference type="ChEBI" id="CHEBI:61557"/>
        <dbReference type="ChEBI" id="CHEBI:456216"/>
        <dbReference type="EC" id="2.7.4.6"/>
    </reaction>
</comment>
<comment type="subcellular location">
    <subcellularLocation>
        <location evidence="2">Cytoplasm</location>
        <location evidence="2">Cytosol</location>
    </subcellularLocation>
    <subcellularLocation>
        <location evidence="2">Cell projection</location>
        <location evidence="2">Cilium</location>
        <location evidence="2">Flagellum</location>
    </subcellularLocation>
    <text evidence="2">Detected along the full length of sperm flagellum, where it colocalizes with alpha-tubulin.</text>
</comment>
<comment type="similarity">
    <text evidence="4">In the central section; belongs to the adenylate kinase family.</text>
</comment>
<comment type="similarity">
    <text evidence="4">In the C-terminal section; belongs to the dpy-30 family.</text>
</comment>
<comment type="sequence caution" evidence="4">
    <conflict type="erroneous initiation">
        <sequence resource="EMBL-CDS" id="BAB63080"/>
    </conflict>
</comment>
<organism>
    <name type="scientific">Macaca fascicularis</name>
    <name type="common">Crab-eating macaque</name>
    <name type="synonym">Cynomolgus monkey</name>
    <dbReference type="NCBI Taxonomy" id="9541"/>
    <lineage>
        <taxon>Eukaryota</taxon>
        <taxon>Metazoa</taxon>
        <taxon>Chordata</taxon>
        <taxon>Craniata</taxon>
        <taxon>Vertebrata</taxon>
        <taxon>Euteleostomi</taxon>
        <taxon>Mammalia</taxon>
        <taxon>Eutheria</taxon>
        <taxon>Euarchontoglires</taxon>
        <taxon>Primates</taxon>
        <taxon>Haplorrhini</taxon>
        <taxon>Catarrhini</taxon>
        <taxon>Cercopithecidae</taxon>
        <taxon>Cercopithecinae</taxon>
        <taxon>Macaca</taxon>
    </lineage>
</organism>
<reference key="1">
    <citation type="journal article" date="2002" name="BMC Genomics">
        <title>Cynomolgus monkey testicular cDNAs for discovery of novel human genes in the human genome sequence.</title>
        <authorList>
            <person name="Osada N."/>
            <person name="Hida M."/>
            <person name="Kusuda J."/>
            <person name="Tanuma R."/>
            <person name="Hirata M."/>
            <person name="Suto Y."/>
            <person name="Hirai M."/>
            <person name="Terao K."/>
            <person name="Sugano S."/>
            <person name="Hashimoto K."/>
        </authorList>
    </citation>
    <scope>NUCLEOTIDE SEQUENCE [LARGE SCALE MRNA]</scope>
    <source>
        <tissue>Testis</tissue>
    </source>
</reference>
<accession>Q95JP6</accession>